<accession>P13537</accession>
<name>EFTU_THEMA</name>
<reference key="1">
    <citation type="journal article" date="1989" name="FEMS Microbiol. Lett.">
        <title>Nucleotide sequence of the gene coding for the elongation factor Tu from the extremely thermophilic eubacterium Thermotoga maritima.</title>
        <authorList>
            <person name="Bachleitner M."/>
            <person name="Ludwig W."/>
            <person name="Stetter K.O."/>
            <person name="Schleifer K.H."/>
        </authorList>
    </citation>
    <scope>NUCLEOTIDE SEQUENCE [GENOMIC DNA]</scope>
    <source>
        <strain>ATCC 43589 / DSM 3109 / JCM 10099 / NBRC 100826 / MSB8</strain>
    </source>
</reference>
<reference key="2">
    <citation type="journal article" date="1999" name="Nature">
        <title>Evidence for lateral gene transfer between Archaea and Bacteria from genome sequence of Thermotoga maritima.</title>
        <authorList>
            <person name="Nelson K.E."/>
            <person name="Clayton R.A."/>
            <person name="Gill S.R."/>
            <person name="Gwinn M.L."/>
            <person name="Dodson R.J."/>
            <person name="Haft D.H."/>
            <person name="Hickey E.K."/>
            <person name="Peterson J.D."/>
            <person name="Nelson W.C."/>
            <person name="Ketchum K.A."/>
            <person name="McDonald L.A."/>
            <person name="Utterback T.R."/>
            <person name="Malek J.A."/>
            <person name="Linher K.D."/>
            <person name="Garrett M.M."/>
            <person name="Stewart A.M."/>
            <person name="Cotton M.D."/>
            <person name="Pratt M.S."/>
            <person name="Phillips C.A."/>
            <person name="Richardson D.L."/>
            <person name="Heidelberg J.F."/>
            <person name="Sutton G.G."/>
            <person name="Fleischmann R.D."/>
            <person name="Eisen J.A."/>
            <person name="White O."/>
            <person name="Salzberg S.L."/>
            <person name="Smith H.O."/>
            <person name="Venter J.C."/>
            <person name="Fraser C.M."/>
        </authorList>
    </citation>
    <scope>NUCLEOTIDE SEQUENCE [LARGE SCALE GENOMIC DNA]</scope>
    <source>
        <strain>ATCC 43589 / DSM 3109 / JCM 10099 / NBRC 100826 / MSB8</strain>
    </source>
</reference>
<reference key="3">
    <citation type="journal article" date="1991" name="J. Mol. Evol.">
        <title>Phylogenetic depth of Thermotoga maritima inferred from analysis of the fus gene: amino acid sequence of elongation factor G and organization of the Thermotoga str operon.</title>
        <authorList>
            <person name="Tiboni O."/>
            <person name="Cantoni R."/>
            <person name="Creti R."/>
            <person name="Cammarano P."/>
            <person name="Sanangelantoni A.M."/>
        </authorList>
    </citation>
    <scope>NUCLEOTIDE SEQUENCE [GENOMIC DNA] OF 1-13</scope>
    <source>
        <strain>ATCC 43589 / DSM 3109 / JCM 10099 / NBRC 100826 / MSB8</strain>
    </source>
</reference>
<gene>
    <name evidence="2" type="primary">tuf</name>
    <name type="ordered locus">TM_1502</name>
</gene>
<comment type="function">
    <text evidence="2">GTP hydrolase that promotes the GTP-dependent binding of aminoacyl-tRNA to the A-site of ribosomes during protein biosynthesis.</text>
</comment>
<comment type="catalytic activity">
    <reaction evidence="2">
        <text>GTP + H2O = GDP + phosphate + H(+)</text>
        <dbReference type="Rhea" id="RHEA:19669"/>
        <dbReference type="ChEBI" id="CHEBI:15377"/>
        <dbReference type="ChEBI" id="CHEBI:15378"/>
        <dbReference type="ChEBI" id="CHEBI:37565"/>
        <dbReference type="ChEBI" id="CHEBI:43474"/>
        <dbReference type="ChEBI" id="CHEBI:58189"/>
        <dbReference type="EC" id="3.6.5.3"/>
    </reaction>
    <physiologicalReaction direction="left-to-right" evidence="2">
        <dbReference type="Rhea" id="RHEA:19670"/>
    </physiologicalReaction>
</comment>
<comment type="subunit">
    <text evidence="2">Monomer.</text>
</comment>
<comment type="subcellular location">
    <subcellularLocation>
        <location evidence="2">Cytoplasm</location>
    </subcellularLocation>
</comment>
<comment type="similarity">
    <text evidence="2">Belongs to the TRAFAC class translation factor GTPase superfamily. Classic translation factor GTPase family. EF-Tu/EF-1A subfamily.</text>
</comment>
<protein>
    <recommendedName>
        <fullName evidence="2">Elongation factor Tu</fullName>
        <shortName evidence="2">EF-Tu</shortName>
        <ecNumber evidence="2">3.6.5.3</ecNumber>
    </recommendedName>
</protein>
<feature type="chain" id="PRO_0000091421" description="Elongation factor Tu">
    <location>
        <begin position="1"/>
        <end position="400"/>
    </location>
</feature>
<feature type="domain" description="tr-type G">
    <location>
        <begin position="10"/>
        <end position="208"/>
    </location>
</feature>
<feature type="region of interest" description="G1" evidence="1">
    <location>
        <begin position="19"/>
        <end position="26"/>
    </location>
</feature>
<feature type="region of interest" description="G2" evidence="1">
    <location>
        <begin position="60"/>
        <end position="64"/>
    </location>
</feature>
<feature type="region of interest" description="G3" evidence="1">
    <location>
        <begin position="81"/>
        <end position="84"/>
    </location>
</feature>
<feature type="region of interest" description="G4" evidence="1">
    <location>
        <begin position="136"/>
        <end position="139"/>
    </location>
</feature>
<feature type="region of interest" description="G5" evidence="1">
    <location>
        <begin position="174"/>
        <end position="176"/>
    </location>
</feature>
<feature type="binding site" evidence="2">
    <location>
        <begin position="19"/>
        <end position="26"/>
    </location>
    <ligand>
        <name>GTP</name>
        <dbReference type="ChEBI" id="CHEBI:37565"/>
    </ligand>
</feature>
<feature type="binding site" evidence="2">
    <location>
        <position position="26"/>
    </location>
    <ligand>
        <name>Mg(2+)</name>
        <dbReference type="ChEBI" id="CHEBI:18420"/>
    </ligand>
</feature>
<feature type="binding site" evidence="2">
    <location>
        <begin position="81"/>
        <end position="85"/>
    </location>
    <ligand>
        <name>GTP</name>
        <dbReference type="ChEBI" id="CHEBI:37565"/>
    </ligand>
</feature>
<feature type="binding site" evidence="2">
    <location>
        <begin position="136"/>
        <end position="139"/>
    </location>
    <ligand>
        <name>GTP</name>
        <dbReference type="ChEBI" id="CHEBI:37565"/>
    </ligand>
</feature>
<feature type="sequence conflict" description="In Ref. 1; AAA27415." evidence="3" ref="1">
    <original>G</original>
    <variation>V</variation>
    <location>
        <position position="40"/>
    </location>
</feature>
<dbReference type="EC" id="3.6.5.3" evidence="2"/>
<dbReference type="EMBL" id="M27479">
    <property type="protein sequence ID" value="AAA27415.1"/>
    <property type="molecule type" value="Genomic_DNA"/>
</dbReference>
<dbReference type="EMBL" id="AE000512">
    <property type="protein sequence ID" value="AAD36569.1"/>
    <property type="molecule type" value="Genomic_DNA"/>
</dbReference>
<dbReference type="EMBL" id="S57688">
    <property type="protein sequence ID" value="AAB19929.1"/>
    <property type="molecule type" value="Genomic_DNA"/>
</dbReference>
<dbReference type="PIR" id="G72243">
    <property type="entry name" value="G72243"/>
</dbReference>
<dbReference type="RefSeq" id="NP_229302.1">
    <property type="nucleotide sequence ID" value="NC_000853.1"/>
</dbReference>
<dbReference type="RefSeq" id="WP_004081839.1">
    <property type="nucleotide sequence ID" value="NC_000853.1"/>
</dbReference>
<dbReference type="SMR" id="P13537"/>
<dbReference type="FunCoup" id="P13537">
    <property type="interactions" value="399"/>
</dbReference>
<dbReference type="STRING" id="243274.TM_1502"/>
<dbReference type="PaxDb" id="243274-THEMA_06790"/>
<dbReference type="EnsemblBacteria" id="AAD36569">
    <property type="protein sequence ID" value="AAD36569"/>
    <property type="gene ID" value="TM_1502"/>
</dbReference>
<dbReference type="KEGG" id="tma:TM1502"/>
<dbReference type="KEGG" id="tmi:THEMA_06790"/>
<dbReference type="KEGG" id="tmm:Tmari_1510"/>
<dbReference type="KEGG" id="tmw:THMA_1534"/>
<dbReference type="eggNOG" id="COG0050">
    <property type="taxonomic scope" value="Bacteria"/>
</dbReference>
<dbReference type="InParanoid" id="P13537"/>
<dbReference type="OrthoDB" id="9804504at2"/>
<dbReference type="Proteomes" id="UP000008183">
    <property type="component" value="Chromosome"/>
</dbReference>
<dbReference type="GO" id="GO:0005737">
    <property type="term" value="C:cytoplasm"/>
    <property type="evidence" value="ECO:0007669"/>
    <property type="project" value="UniProtKB-SubCell"/>
</dbReference>
<dbReference type="GO" id="GO:0005525">
    <property type="term" value="F:GTP binding"/>
    <property type="evidence" value="ECO:0007669"/>
    <property type="project" value="UniProtKB-UniRule"/>
</dbReference>
<dbReference type="GO" id="GO:0003924">
    <property type="term" value="F:GTPase activity"/>
    <property type="evidence" value="ECO:0007669"/>
    <property type="project" value="InterPro"/>
</dbReference>
<dbReference type="GO" id="GO:0003746">
    <property type="term" value="F:translation elongation factor activity"/>
    <property type="evidence" value="ECO:0000318"/>
    <property type="project" value="GO_Central"/>
</dbReference>
<dbReference type="GO" id="GO:0006414">
    <property type="term" value="P:translational elongation"/>
    <property type="evidence" value="ECO:0000318"/>
    <property type="project" value="GO_Central"/>
</dbReference>
<dbReference type="CDD" id="cd01884">
    <property type="entry name" value="EF_Tu"/>
    <property type="match status" value="1"/>
</dbReference>
<dbReference type="CDD" id="cd03697">
    <property type="entry name" value="EFTU_II"/>
    <property type="match status" value="1"/>
</dbReference>
<dbReference type="CDD" id="cd03707">
    <property type="entry name" value="EFTU_III"/>
    <property type="match status" value="1"/>
</dbReference>
<dbReference type="FunFam" id="2.40.30.10:FF:000001">
    <property type="entry name" value="Elongation factor Tu"/>
    <property type="match status" value="1"/>
</dbReference>
<dbReference type="FunFam" id="3.40.50.300:FF:000003">
    <property type="entry name" value="Elongation factor Tu"/>
    <property type="match status" value="1"/>
</dbReference>
<dbReference type="Gene3D" id="3.40.50.300">
    <property type="entry name" value="P-loop containing nucleotide triphosphate hydrolases"/>
    <property type="match status" value="1"/>
</dbReference>
<dbReference type="Gene3D" id="2.40.30.10">
    <property type="entry name" value="Translation factors"/>
    <property type="match status" value="2"/>
</dbReference>
<dbReference type="HAMAP" id="MF_00118_B">
    <property type="entry name" value="EF_Tu_B"/>
    <property type="match status" value="1"/>
</dbReference>
<dbReference type="InterPro" id="IPR041709">
    <property type="entry name" value="EF-Tu_GTP-bd"/>
</dbReference>
<dbReference type="InterPro" id="IPR050055">
    <property type="entry name" value="EF-Tu_GTPase"/>
</dbReference>
<dbReference type="InterPro" id="IPR004161">
    <property type="entry name" value="EFTu-like_2"/>
</dbReference>
<dbReference type="InterPro" id="IPR033720">
    <property type="entry name" value="EFTU_2"/>
</dbReference>
<dbReference type="InterPro" id="IPR031157">
    <property type="entry name" value="G_TR_CS"/>
</dbReference>
<dbReference type="InterPro" id="IPR027417">
    <property type="entry name" value="P-loop_NTPase"/>
</dbReference>
<dbReference type="InterPro" id="IPR005225">
    <property type="entry name" value="Small_GTP-bd"/>
</dbReference>
<dbReference type="InterPro" id="IPR000795">
    <property type="entry name" value="T_Tr_GTP-bd_dom"/>
</dbReference>
<dbReference type="InterPro" id="IPR009000">
    <property type="entry name" value="Transl_B-barrel_sf"/>
</dbReference>
<dbReference type="InterPro" id="IPR009001">
    <property type="entry name" value="Transl_elong_EF1A/Init_IF2_C"/>
</dbReference>
<dbReference type="InterPro" id="IPR004541">
    <property type="entry name" value="Transl_elong_EFTu/EF1A_bac/org"/>
</dbReference>
<dbReference type="InterPro" id="IPR004160">
    <property type="entry name" value="Transl_elong_EFTu/EF1A_C"/>
</dbReference>
<dbReference type="NCBIfam" id="TIGR00485">
    <property type="entry name" value="EF-Tu"/>
    <property type="match status" value="1"/>
</dbReference>
<dbReference type="NCBIfam" id="NF000766">
    <property type="entry name" value="PRK00049.1"/>
    <property type="match status" value="1"/>
</dbReference>
<dbReference type="NCBIfam" id="NF009372">
    <property type="entry name" value="PRK12735.1"/>
    <property type="match status" value="1"/>
</dbReference>
<dbReference type="NCBIfam" id="NF009373">
    <property type="entry name" value="PRK12736.1"/>
    <property type="match status" value="1"/>
</dbReference>
<dbReference type="NCBIfam" id="TIGR00231">
    <property type="entry name" value="small_GTP"/>
    <property type="match status" value="1"/>
</dbReference>
<dbReference type="PANTHER" id="PTHR43721:SF22">
    <property type="entry name" value="ELONGATION FACTOR TU, MITOCHONDRIAL"/>
    <property type="match status" value="1"/>
</dbReference>
<dbReference type="PANTHER" id="PTHR43721">
    <property type="entry name" value="ELONGATION FACTOR TU-RELATED"/>
    <property type="match status" value="1"/>
</dbReference>
<dbReference type="Pfam" id="PF00009">
    <property type="entry name" value="GTP_EFTU"/>
    <property type="match status" value="1"/>
</dbReference>
<dbReference type="Pfam" id="PF03144">
    <property type="entry name" value="GTP_EFTU_D2"/>
    <property type="match status" value="1"/>
</dbReference>
<dbReference type="Pfam" id="PF03143">
    <property type="entry name" value="GTP_EFTU_D3"/>
    <property type="match status" value="1"/>
</dbReference>
<dbReference type="PRINTS" id="PR00315">
    <property type="entry name" value="ELONGATNFCT"/>
</dbReference>
<dbReference type="SUPFAM" id="SSF50465">
    <property type="entry name" value="EF-Tu/eEF-1alpha/eIF2-gamma C-terminal domain"/>
    <property type="match status" value="1"/>
</dbReference>
<dbReference type="SUPFAM" id="SSF52540">
    <property type="entry name" value="P-loop containing nucleoside triphosphate hydrolases"/>
    <property type="match status" value="1"/>
</dbReference>
<dbReference type="SUPFAM" id="SSF50447">
    <property type="entry name" value="Translation proteins"/>
    <property type="match status" value="1"/>
</dbReference>
<dbReference type="PROSITE" id="PS00301">
    <property type="entry name" value="G_TR_1"/>
    <property type="match status" value="1"/>
</dbReference>
<dbReference type="PROSITE" id="PS51722">
    <property type="entry name" value="G_TR_2"/>
    <property type="match status" value="1"/>
</dbReference>
<keyword id="KW-0963">Cytoplasm</keyword>
<keyword id="KW-0251">Elongation factor</keyword>
<keyword id="KW-0342">GTP-binding</keyword>
<keyword id="KW-0378">Hydrolase</keyword>
<keyword id="KW-0460">Magnesium</keyword>
<keyword id="KW-0479">Metal-binding</keyword>
<keyword id="KW-0547">Nucleotide-binding</keyword>
<keyword id="KW-0648">Protein biosynthesis</keyword>
<keyword id="KW-1185">Reference proteome</keyword>
<proteinExistence type="inferred from homology"/>
<sequence>MAKEKFVRTKPHVNVGTIGHIDHGKSTLTAAITKYLSLKGLAQYIPYDQIDKAPEEKARGITINITHVEYETEKRHYAHIDCPGHADYIKNMITGAAQMDGAILVVAATDGPMPQTREHVLLARQVEVPYMIVFINKTDMVDDPELIDLVEMEVRDLLSQYGYPGDEVPVIRGSALKAVEAPNDPNHEAYKPIQELLDAMDNYIPDPQRDVDKPFLMPIEDVFSITGRGTVVTGRIERGRIRPGDEVEIIGLSYEIKKTVVTSVEMFRKELDEGIAGDNVGCLLRGIDKDEVERGQVLAAPGSIKPHKRFKAQIYVLKKEEGGRHTPFTKGYKPQFYIRTADVTGEIVGLPEGVEMVMPGDHVEMEIELIYPVAIEKGQRFAVREGGRTVGAGVVTEVIE</sequence>
<evidence type="ECO:0000250" key="1"/>
<evidence type="ECO:0000255" key="2">
    <source>
        <dbReference type="HAMAP-Rule" id="MF_00118"/>
    </source>
</evidence>
<evidence type="ECO:0000305" key="3"/>
<organism>
    <name type="scientific">Thermotoga maritima (strain ATCC 43589 / DSM 3109 / JCM 10099 / NBRC 100826 / MSB8)</name>
    <dbReference type="NCBI Taxonomy" id="243274"/>
    <lineage>
        <taxon>Bacteria</taxon>
        <taxon>Thermotogati</taxon>
        <taxon>Thermotogota</taxon>
        <taxon>Thermotogae</taxon>
        <taxon>Thermotogales</taxon>
        <taxon>Thermotogaceae</taxon>
        <taxon>Thermotoga</taxon>
    </lineage>
</organism>